<keyword id="KW-0004">4Fe-4S</keyword>
<keyword id="KW-0903">Direct protein sequencing</keyword>
<keyword id="KW-0408">Iron</keyword>
<keyword id="KW-0411">Iron-sulfur</keyword>
<keyword id="KW-0479">Metal-binding</keyword>
<keyword id="KW-0560">Oxidoreductase</keyword>
<proteinExistence type="evidence at protein level"/>
<evidence type="ECO:0000250" key="1">
    <source>
        <dbReference type="UniProtKB" id="P94692"/>
    </source>
</evidence>
<evidence type="ECO:0000256" key="2">
    <source>
        <dbReference type="SAM" id="MobiDB-lite"/>
    </source>
</evidence>
<evidence type="ECO:0000269" key="3">
    <source>
    </source>
</evidence>
<evidence type="ECO:0000305" key="4"/>
<name>PORB_METTM</name>
<organism>
    <name type="scientific">Methanothermobacter marburgensis (strain ATCC BAA-927 / DSM 2133 / JCM 14651 / NBRC 100331 / OCM 82 / Marburg)</name>
    <name type="common">Methanobacterium thermoautotrophicum</name>
    <dbReference type="NCBI Taxonomy" id="79929"/>
    <lineage>
        <taxon>Archaea</taxon>
        <taxon>Methanobacteriati</taxon>
        <taxon>Methanobacteriota</taxon>
        <taxon>Methanomada group</taxon>
        <taxon>Methanobacteria</taxon>
        <taxon>Methanobacteriales</taxon>
        <taxon>Methanobacteriaceae</taxon>
        <taxon>Methanothermobacter</taxon>
    </lineage>
</organism>
<reference key="1">
    <citation type="journal article" date="2010" name="J. Bacteriol.">
        <title>Complete genome sequence of Methanothermobacter marburgensis, a methanoarchaeon model organism.</title>
        <authorList>
            <person name="Liesegang H."/>
            <person name="Kaster A.K."/>
            <person name="Wiezer A."/>
            <person name="Goenrich M."/>
            <person name="Wollherr A."/>
            <person name="Seedorf H."/>
            <person name="Gottschalk G."/>
            <person name="Thauer R.K."/>
        </authorList>
    </citation>
    <scope>NUCLEOTIDE SEQUENCE [LARGE SCALE GENOMIC DNA]</scope>
    <source>
        <strain>ATCC BAA-927 / DSM 2133 / JCM 14651 / NBRC 100331 / OCM 82 / Marburg</strain>
    </source>
</reference>
<reference key="2">
    <citation type="journal article" date="1997" name="Eur. J. Biochem.">
        <title>Structures and functions of four anabolic 2-oxoacid oxidoreductases in Methanobacterium thermoautotrophicum.</title>
        <authorList>
            <person name="Tersteegen A."/>
            <person name="Linder D."/>
            <person name="Thauer R.K."/>
            <person name="Hedderich R."/>
        </authorList>
    </citation>
    <scope>PROTEIN SEQUENCE OF 1-10</scope>
    <scope>BIOPHYSICOCHEMICAL PROPERTIES</scope>
    <scope>SUBUNIT</scope>
    <source>
        <strain>ATCC BAA-927 / DSM 2133 / JCM 14651 / NBRC 100331 / OCM 82 / Marburg</strain>
    </source>
</reference>
<feature type="chain" id="PRO_0000099905" description="Pyruvate synthase subunit PorB">
    <location>
        <begin position="1"/>
        <end position="288"/>
    </location>
</feature>
<feature type="region of interest" description="Disordered" evidence="2">
    <location>
        <begin position="137"/>
        <end position="159"/>
    </location>
</feature>
<feature type="compositionally biased region" description="Polar residues" evidence="2">
    <location>
        <begin position="137"/>
        <end position="148"/>
    </location>
</feature>
<feature type="compositionally biased region" description="Basic and acidic residues" evidence="2">
    <location>
        <begin position="149"/>
        <end position="159"/>
    </location>
</feature>
<feature type="binding site" evidence="1">
    <location>
        <position position="16"/>
    </location>
    <ligand>
        <name>[4Fe-4S] cluster</name>
        <dbReference type="ChEBI" id="CHEBI:49883"/>
    </ligand>
</feature>
<feature type="binding site" evidence="1">
    <location>
        <position position="19"/>
    </location>
    <ligand>
        <name>[4Fe-4S] cluster</name>
        <dbReference type="ChEBI" id="CHEBI:49883"/>
    </ligand>
</feature>
<feature type="binding site" evidence="1">
    <location>
        <position position="44"/>
    </location>
    <ligand>
        <name>[4Fe-4S] cluster</name>
        <dbReference type="ChEBI" id="CHEBI:49883"/>
    </ligand>
</feature>
<feature type="binding site" evidence="1">
    <location>
        <position position="208"/>
    </location>
    <ligand>
        <name>[4Fe-4S] cluster</name>
        <dbReference type="ChEBI" id="CHEBI:49883"/>
    </ligand>
</feature>
<feature type="sequence conflict" description="In Ref. 2; AA sequence." evidence="4" ref="2">
    <original>E</original>
    <variation>Q</variation>
    <location>
        <position position="6"/>
    </location>
</feature>
<feature type="sequence conflict" description="In Ref. 2; AA sequence." evidence="4" ref="2">
    <original>A</original>
    <variation>R</variation>
    <location>
        <position position="10"/>
    </location>
</feature>
<accession>P80901</accession>
<accession>D9PUM1</accession>
<protein>
    <recommendedName>
        <fullName>Pyruvate synthase subunit PorB</fullName>
        <ecNumber>1.2.7.1</ecNumber>
    </recommendedName>
    <alternativeName>
        <fullName>Pyruvate oxidoreductase beta chain</fullName>
        <shortName>POR</shortName>
    </alternativeName>
    <alternativeName>
        <fullName>Pyruvic-ferredoxin oxidoreductase subunit beta</fullName>
    </alternativeName>
</protein>
<comment type="catalytic activity">
    <reaction>
        <text>2 oxidized [2Fe-2S]-[ferredoxin] + pyruvate + CoA = 2 reduced [2Fe-2S]-[ferredoxin] + acetyl-CoA + CO2 + H(+)</text>
        <dbReference type="Rhea" id="RHEA:12765"/>
        <dbReference type="Rhea" id="RHEA-COMP:10000"/>
        <dbReference type="Rhea" id="RHEA-COMP:10001"/>
        <dbReference type="ChEBI" id="CHEBI:15361"/>
        <dbReference type="ChEBI" id="CHEBI:15378"/>
        <dbReference type="ChEBI" id="CHEBI:16526"/>
        <dbReference type="ChEBI" id="CHEBI:33737"/>
        <dbReference type="ChEBI" id="CHEBI:33738"/>
        <dbReference type="ChEBI" id="CHEBI:57287"/>
        <dbReference type="ChEBI" id="CHEBI:57288"/>
        <dbReference type="EC" id="1.2.7.1"/>
    </reaction>
</comment>
<comment type="cofactor">
    <cofactor evidence="1">
        <name>[4Fe-4S] cluster</name>
        <dbReference type="ChEBI" id="CHEBI:49883"/>
    </cofactor>
    <text evidence="1">Binds 1 [4Fe-4S] cluster per subunit.</text>
</comment>
<comment type="biophysicochemical properties">
    <phDependence>
        <text evidence="3">Optimum pH is 10.0.</text>
    </phDependence>
    <temperatureDependence>
        <text evidence="3">Optimum temperature is 80 degrees Celsius.</text>
    </temperatureDependence>
</comment>
<comment type="subunit">
    <text evidence="3">Heterotetramer of one alpha, one beta, one delta and one gamma chain.</text>
</comment>
<sequence>MKIPEEEFLAPGHRGCAGCGATVGVRLALKVLGKNTVAVSSTGCLEVITTPYPETAWEIPWIHVAFENAAAVASGVERALRARGRGEVNVVAFAGDGGTADIGLQSLSGAMERGHNIIYICYDNEAYMNTGIQRSASTPYGASTTTSPHGKESFGEDRPKKNMPLIMAAHGVPYVATASISYPEDFMEKVRKARDIEGPAYIHLHQPCTTGWGFDPSKTVELGRLAVETGSWILYEIEDGDFRVTYRPVQRKPVEEYLNAQKRFRHLTEEQKAKIQEYVDSVCQELRI</sequence>
<dbReference type="EC" id="1.2.7.1"/>
<dbReference type="EMBL" id="CP001710">
    <property type="protein sequence ID" value="ADL57919.1"/>
    <property type="molecule type" value="Genomic_DNA"/>
</dbReference>
<dbReference type="RefSeq" id="WP_013295146.1">
    <property type="nucleotide sequence ID" value="NC_014408.1"/>
</dbReference>
<dbReference type="SMR" id="P80901"/>
<dbReference type="STRING" id="79929.MTBMA_c03130"/>
<dbReference type="PaxDb" id="79929-MTBMA_c03130"/>
<dbReference type="GeneID" id="41326762"/>
<dbReference type="GeneID" id="9704019"/>
<dbReference type="KEGG" id="mmg:MTBMA_c03130"/>
<dbReference type="PATRIC" id="fig|79929.8.peg.307"/>
<dbReference type="HOGENOM" id="CLU_058423_0_0_2"/>
<dbReference type="OrthoDB" id="296931at2157"/>
<dbReference type="Proteomes" id="UP000000345">
    <property type="component" value="Chromosome"/>
</dbReference>
<dbReference type="GO" id="GO:0051539">
    <property type="term" value="F:4 iron, 4 sulfur cluster binding"/>
    <property type="evidence" value="ECO:0007669"/>
    <property type="project" value="UniProtKB-KW"/>
</dbReference>
<dbReference type="GO" id="GO:0046872">
    <property type="term" value="F:metal ion binding"/>
    <property type="evidence" value="ECO:0007669"/>
    <property type="project" value="UniProtKB-KW"/>
</dbReference>
<dbReference type="GO" id="GO:0019164">
    <property type="term" value="F:pyruvate synthase activity"/>
    <property type="evidence" value="ECO:0007669"/>
    <property type="project" value="UniProtKB-EC"/>
</dbReference>
<dbReference type="GO" id="GO:0030976">
    <property type="term" value="F:thiamine pyrophosphate binding"/>
    <property type="evidence" value="ECO:0007669"/>
    <property type="project" value="InterPro"/>
</dbReference>
<dbReference type="CDD" id="cd03376">
    <property type="entry name" value="TPP_PFOR_porB_like"/>
    <property type="match status" value="1"/>
</dbReference>
<dbReference type="Gene3D" id="3.40.50.970">
    <property type="match status" value="2"/>
</dbReference>
<dbReference type="InterPro" id="IPR051479">
    <property type="entry name" value="PorB-like"/>
</dbReference>
<dbReference type="InterPro" id="IPR029061">
    <property type="entry name" value="THDP-binding"/>
</dbReference>
<dbReference type="InterPro" id="IPR011766">
    <property type="entry name" value="TPP_enzyme_TPP-bd"/>
</dbReference>
<dbReference type="NCBIfam" id="NF008819">
    <property type="entry name" value="PRK11865.1"/>
    <property type="match status" value="1"/>
</dbReference>
<dbReference type="PANTHER" id="PTHR42897">
    <property type="entry name" value="PYRUVATE SYNTHASE SUBUNIT PORB"/>
    <property type="match status" value="1"/>
</dbReference>
<dbReference type="PANTHER" id="PTHR42897:SF2">
    <property type="entry name" value="PYRUVATE SYNTHASE SUBUNIT PORB"/>
    <property type="match status" value="1"/>
</dbReference>
<dbReference type="Pfam" id="PF02775">
    <property type="entry name" value="TPP_enzyme_C"/>
    <property type="match status" value="1"/>
</dbReference>
<dbReference type="SUPFAM" id="SSF52518">
    <property type="entry name" value="Thiamin diphosphate-binding fold (THDP-binding)"/>
    <property type="match status" value="1"/>
</dbReference>
<gene>
    <name type="primary">porB</name>
    <name type="ordered locus">MTBMA_c03130</name>
</gene>